<accession>Q2RMJ4</accession>
<keyword id="KW-0067">ATP-binding</keyword>
<keyword id="KW-0963">Cytoplasm</keyword>
<keyword id="KW-0227">DNA damage</keyword>
<keyword id="KW-0234">DNA repair</keyword>
<keyword id="KW-0235">DNA replication</keyword>
<keyword id="KW-0238">DNA-binding</keyword>
<keyword id="KW-0547">Nucleotide-binding</keyword>
<keyword id="KW-0742">SOS response</keyword>
<sequence length="370" mass="42092">MPALSLQQLQLINFRSYKCLTWDCRPGLNIIFGPNAAGKTNLLEAIGYLALARSFRQQQDQQLLTWGASSFQVRGLCHSNGEKIELVINYQQHNKRLTINGNRNRLIELLGIFPVIYFGPDDLHLLKGGPAYRRHFLDREISMGDRLYCRNLQDYRRILFQRNLLLRAIKAGRGKEGELEPWDIQLLATGKAICEKRSCFLQSLAPRVAATYRDMAGGEELALIYRPGVASQEEWAERLKVGREREVQAGMTLWGPHRDDFTFTLDGHEARYFASQGQQRAIVLALKLAEARYYRELLHVMPVLLLDDVFSELDEAHQGALLELLAGADQAFLTTTEVGLLPARLIQRSHLWELARGREPRLTSGPVEAQ</sequence>
<gene>
    <name evidence="1" type="primary">recF</name>
    <name type="ordered locus">Moth_0005</name>
</gene>
<reference key="1">
    <citation type="journal article" date="2008" name="Environ. Microbiol.">
        <title>The complete genome sequence of Moorella thermoacetica (f. Clostridium thermoaceticum).</title>
        <authorList>
            <person name="Pierce E."/>
            <person name="Xie G."/>
            <person name="Barabote R.D."/>
            <person name="Saunders E."/>
            <person name="Han C.S."/>
            <person name="Detter J.C."/>
            <person name="Richardson P."/>
            <person name="Brettin T.S."/>
            <person name="Das A."/>
            <person name="Ljungdahl L.G."/>
            <person name="Ragsdale S.W."/>
        </authorList>
    </citation>
    <scope>NUCLEOTIDE SEQUENCE [LARGE SCALE GENOMIC DNA]</scope>
    <source>
        <strain>ATCC 39073 / JCM 9320</strain>
    </source>
</reference>
<organism>
    <name type="scientific">Moorella thermoacetica (strain ATCC 39073 / JCM 9320)</name>
    <dbReference type="NCBI Taxonomy" id="264732"/>
    <lineage>
        <taxon>Bacteria</taxon>
        <taxon>Bacillati</taxon>
        <taxon>Bacillota</taxon>
        <taxon>Clostridia</taxon>
        <taxon>Moorellales</taxon>
        <taxon>Moorellaceae</taxon>
        <taxon>Moorella</taxon>
    </lineage>
</organism>
<protein>
    <recommendedName>
        <fullName evidence="1">DNA replication and repair protein RecF</fullName>
    </recommendedName>
</protein>
<feature type="chain" id="PRO_0000236128" description="DNA replication and repair protein RecF">
    <location>
        <begin position="1"/>
        <end position="370"/>
    </location>
</feature>
<feature type="binding site" evidence="1">
    <location>
        <begin position="33"/>
        <end position="40"/>
    </location>
    <ligand>
        <name>ATP</name>
        <dbReference type="ChEBI" id="CHEBI:30616"/>
    </ligand>
</feature>
<name>RECF_MOOTA</name>
<comment type="function">
    <text evidence="1">The RecF protein is involved in DNA metabolism; it is required for DNA replication and normal SOS inducibility. RecF binds preferentially to single-stranded, linear DNA. It also seems to bind ATP.</text>
</comment>
<comment type="subcellular location">
    <subcellularLocation>
        <location evidence="1">Cytoplasm</location>
    </subcellularLocation>
</comment>
<comment type="similarity">
    <text evidence="1">Belongs to the RecF family.</text>
</comment>
<evidence type="ECO:0000255" key="1">
    <source>
        <dbReference type="HAMAP-Rule" id="MF_00365"/>
    </source>
</evidence>
<dbReference type="EMBL" id="CP000232">
    <property type="protein sequence ID" value="ABC18345.1"/>
    <property type="molecule type" value="Genomic_DNA"/>
</dbReference>
<dbReference type="RefSeq" id="YP_428888.1">
    <property type="nucleotide sequence ID" value="NC_007644.1"/>
</dbReference>
<dbReference type="SMR" id="Q2RMJ4"/>
<dbReference type="STRING" id="264732.Moth_0005"/>
<dbReference type="EnsemblBacteria" id="ABC18345">
    <property type="protein sequence ID" value="ABC18345"/>
    <property type="gene ID" value="Moth_0005"/>
</dbReference>
<dbReference type="KEGG" id="mta:Moth_0005"/>
<dbReference type="PATRIC" id="fig|264732.11.peg.6"/>
<dbReference type="eggNOG" id="COG1195">
    <property type="taxonomic scope" value="Bacteria"/>
</dbReference>
<dbReference type="HOGENOM" id="CLU_040267_0_1_9"/>
<dbReference type="OrthoDB" id="9803889at2"/>
<dbReference type="GO" id="GO:0005737">
    <property type="term" value="C:cytoplasm"/>
    <property type="evidence" value="ECO:0007669"/>
    <property type="project" value="UniProtKB-SubCell"/>
</dbReference>
<dbReference type="GO" id="GO:0005524">
    <property type="term" value="F:ATP binding"/>
    <property type="evidence" value="ECO:0007669"/>
    <property type="project" value="UniProtKB-UniRule"/>
</dbReference>
<dbReference type="GO" id="GO:0003697">
    <property type="term" value="F:single-stranded DNA binding"/>
    <property type="evidence" value="ECO:0007669"/>
    <property type="project" value="UniProtKB-UniRule"/>
</dbReference>
<dbReference type="GO" id="GO:0006260">
    <property type="term" value="P:DNA replication"/>
    <property type="evidence" value="ECO:0007669"/>
    <property type="project" value="UniProtKB-UniRule"/>
</dbReference>
<dbReference type="GO" id="GO:0000731">
    <property type="term" value="P:DNA synthesis involved in DNA repair"/>
    <property type="evidence" value="ECO:0007669"/>
    <property type="project" value="TreeGrafter"/>
</dbReference>
<dbReference type="GO" id="GO:0006302">
    <property type="term" value="P:double-strand break repair"/>
    <property type="evidence" value="ECO:0007669"/>
    <property type="project" value="TreeGrafter"/>
</dbReference>
<dbReference type="GO" id="GO:0009432">
    <property type="term" value="P:SOS response"/>
    <property type="evidence" value="ECO:0007669"/>
    <property type="project" value="UniProtKB-UniRule"/>
</dbReference>
<dbReference type="Gene3D" id="3.40.50.300">
    <property type="entry name" value="P-loop containing nucleotide triphosphate hydrolases"/>
    <property type="match status" value="1"/>
</dbReference>
<dbReference type="Gene3D" id="1.20.1050.90">
    <property type="entry name" value="RecF/RecN/SMC, N-terminal domain"/>
    <property type="match status" value="1"/>
</dbReference>
<dbReference type="HAMAP" id="MF_00365">
    <property type="entry name" value="RecF"/>
    <property type="match status" value="1"/>
</dbReference>
<dbReference type="InterPro" id="IPR001238">
    <property type="entry name" value="DNA-binding_RecF"/>
</dbReference>
<dbReference type="InterPro" id="IPR018078">
    <property type="entry name" value="DNA-binding_RecF_CS"/>
</dbReference>
<dbReference type="InterPro" id="IPR027417">
    <property type="entry name" value="P-loop_NTPase"/>
</dbReference>
<dbReference type="InterPro" id="IPR003395">
    <property type="entry name" value="RecF/RecN/SMC_N"/>
</dbReference>
<dbReference type="InterPro" id="IPR042174">
    <property type="entry name" value="RecF_2"/>
</dbReference>
<dbReference type="NCBIfam" id="TIGR00611">
    <property type="entry name" value="recf"/>
    <property type="match status" value="1"/>
</dbReference>
<dbReference type="PANTHER" id="PTHR32182">
    <property type="entry name" value="DNA REPLICATION AND REPAIR PROTEIN RECF"/>
    <property type="match status" value="1"/>
</dbReference>
<dbReference type="PANTHER" id="PTHR32182:SF0">
    <property type="entry name" value="DNA REPLICATION AND REPAIR PROTEIN RECF"/>
    <property type="match status" value="1"/>
</dbReference>
<dbReference type="Pfam" id="PF02463">
    <property type="entry name" value="SMC_N"/>
    <property type="match status" value="1"/>
</dbReference>
<dbReference type="SUPFAM" id="SSF52540">
    <property type="entry name" value="P-loop containing nucleoside triphosphate hydrolases"/>
    <property type="match status" value="1"/>
</dbReference>
<dbReference type="PROSITE" id="PS00617">
    <property type="entry name" value="RECF_1"/>
    <property type="match status" value="1"/>
</dbReference>
<dbReference type="PROSITE" id="PS00618">
    <property type="entry name" value="RECF_2"/>
    <property type="match status" value="1"/>
</dbReference>
<proteinExistence type="inferred from homology"/>